<comment type="function">
    <text evidence="1">Na(+)/H(+) antiporter that extrudes sodium in exchange for external protons.</text>
</comment>
<comment type="catalytic activity">
    <reaction evidence="1">
        <text>Na(+)(in) + 2 H(+)(out) = Na(+)(out) + 2 H(+)(in)</text>
        <dbReference type="Rhea" id="RHEA:29251"/>
        <dbReference type="ChEBI" id="CHEBI:15378"/>
        <dbReference type="ChEBI" id="CHEBI:29101"/>
    </reaction>
    <physiologicalReaction direction="left-to-right" evidence="1">
        <dbReference type="Rhea" id="RHEA:29252"/>
    </physiologicalReaction>
</comment>
<comment type="subcellular location">
    <subcellularLocation>
        <location evidence="1">Cell inner membrane</location>
        <topology evidence="1">Multi-pass membrane protein</topology>
    </subcellularLocation>
</comment>
<comment type="similarity">
    <text evidence="1">Belongs to the NhaA Na(+)/H(+) (TC 2.A.33) antiporter family.</text>
</comment>
<gene>
    <name evidence="1" type="primary">nhaA</name>
    <name type="ordered locus">Gura_3369</name>
</gene>
<proteinExistence type="inferred from homology"/>
<protein>
    <recommendedName>
        <fullName evidence="1">Na(+)/H(+) antiporter NhaA</fullName>
    </recommendedName>
    <alternativeName>
        <fullName evidence="1">Sodium/proton antiporter NhaA</fullName>
    </alternativeName>
</protein>
<feature type="chain" id="PRO_0000334307" description="Na(+)/H(+) antiporter NhaA">
    <location>
        <begin position="1"/>
        <end position="386"/>
    </location>
</feature>
<feature type="transmembrane region" description="Helical" evidence="1">
    <location>
        <begin position="10"/>
        <end position="30"/>
    </location>
</feature>
<feature type="transmembrane region" description="Helical" evidence="1">
    <location>
        <begin position="45"/>
        <end position="65"/>
    </location>
</feature>
<feature type="transmembrane region" description="Helical" evidence="1">
    <location>
        <begin position="84"/>
        <end position="104"/>
    </location>
</feature>
<feature type="transmembrane region" description="Helical" evidence="1">
    <location>
        <begin position="116"/>
        <end position="136"/>
    </location>
</feature>
<feature type="transmembrane region" description="Helical" evidence="1">
    <location>
        <begin position="142"/>
        <end position="162"/>
    </location>
</feature>
<feature type="transmembrane region" description="Helical" evidence="1">
    <location>
        <begin position="169"/>
        <end position="189"/>
    </location>
</feature>
<feature type="transmembrane region" description="Helical" evidence="1">
    <location>
        <begin position="261"/>
        <end position="281"/>
    </location>
</feature>
<feature type="transmembrane region" description="Helical" evidence="1">
    <location>
        <begin position="287"/>
        <end position="307"/>
    </location>
</feature>
<feature type="transmembrane region" description="Helical" evidence="1">
    <location>
        <begin position="323"/>
        <end position="343"/>
    </location>
</feature>
<feature type="transmembrane region" description="Helical" evidence="1">
    <location>
        <begin position="358"/>
        <end position="378"/>
    </location>
</feature>
<dbReference type="EMBL" id="CP000698">
    <property type="protein sequence ID" value="ABQ27526.1"/>
    <property type="molecule type" value="Genomic_DNA"/>
</dbReference>
<dbReference type="RefSeq" id="WP_011940187.1">
    <property type="nucleotide sequence ID" value="NC_009483.1"/>
</dbReference>
<dbReference type="SMR" id="A5G6V8"/>
<dbReference type="STRING" id="351605.Gura_3369"/>
<dbReference type="KEGG" id="gur:Gura_3369"/>
<dbReference type="HOGENOM" id="CLU_015803_1_2_7"/>
<dbReference type="OrthoDB" id="9808135at2"/>
<dbReference type="Proteomes" id="UP000006695">
    <property type="component" value="Chromosome"/>
</dbReference>
<dbReference type="GO" id="GO:0005886">
    <property type="term" value="C:plasma membrane"/>
    <property type="evidence" value="ECO:0007669"/>
    <property type="project" value="UniProtKB-SubCell"/>
</dbReference>
<dbReference type="GO" id="GO:0015385">
    <property type="term" value="F:sodium:proton antiporter activity"/>
    <property type="evidence" value="ECO:0007669"/>
    <property type="project" value="TreeGrafter"/>
</dbReference>
<dbReference type="GO" id="GO:0006885">
    <property type="term" value="P:regulation of pH"/>
    <property type="evidence" value="ECO:0007669"/>
    <property type="project" value="InterPro"/>
</dbReference>
<dbReference type="Gene3D" id="1.20.1530.10">
    <property type="entry name" value="Na+/H+ antiporter like domain"/>
    <property type="match status" value="1"/>
</dbReference>
<dbReference type="HAMAP" id="MF_01844">
    <property type="entry name" value="NhaA"/>
    <property type="match status" value="1"/>
</dbReference>
<dbReference type="InterPro" id="IPR023171">
    <property type="entry name" value="Na/H_antiporter_dom_sf"/>
</dbReference>
<dbReference type="InterPro" id="IPR004670">
    <property type="entry name" value="NhaA"/>
</dbReference>
<dbReference type="PANTHER" id="PTHR30341:SF0">
    <property type="entry name" value="NA(+)_H(+) ANTIPORTER NHAA"/>
    <property type="match status" value="1"/>
</dbReference>
<dbReference type="PANTHER" id="PTHR30341">
    <property type="entry name" value="SODIUM ION/PROTON ANTIPORTER NHAA-RELATED"/>
    <property type="match status" value="1"/>
</dbReference>
<dbReference type="Pfam" id="PF06965">
    <property type="entry name" value="Na_H_antiport_1"/>
    <property type="match status" value="1"/>
</dbReference>
<name>NHAA_GEOUR</name>
<organism>
    <name type="scientific">Geotalea uraniireducens (strain Rf4)</name>
    <name type="common">Geobacter uraniireducens</name>
    <dbReference type="NCBI Taxonomy" id="351605"/>
    <lineage>
        <taxon>Bacteria</taxon>
        <taxon>Pseudomonadati</taxon>
        <taxon>Thermodesulfobacteriota</taxon>
        <taxon>Desulfuromonadia</taxon>
        <taxon>Geobacterales</taxon>
        <taxon>Geobacteraceae</taxon>
        <taxon>Geotalea</taxon>
    </lineage>
</organism>
<accession>A5G6V8</accession>
<evidence type="ECO:0000255" key="1">
    <source>
        <dbReference type="HAMAP-Rule" id="MF_01844"/>
    </source>
</evidence>
<keyword id="KW-0050">Antiport</keyword>
<keyword id="KW-0997">Cell inner membrane</keyword>
<keyword id="KW-1003">Cell membrane</keyword>
<keyword id="KW-0406">Ion transport</keyword>
<keyword id="KW-0472">Membrane</keyword>
<keyword id="KW-1185">Reference proteome</keyword>
<keyword id="KW-0915">Sodium</keyword>
<keyword id="KW-0739">Sodium transport</keyword>
<keyword id="KW-0812">Transmembrane</keyword>
<keyword id="KW-1133">Transmembrane helix</keyword>
<keyword id="KW-0813">Transport</keyword>
<sequence>MLKRINLLREFSIPLLAGVLTALVWANVAPDSYHKFNHDHFLGPLSFHFVTNDIFMAFFFAIAAVEITQSCLPGGDMSPLNKALNPLLATAGGVVGPVGVYLALNSLVGSSAFTNGWGIPTATDIAFAWLAARLIFGKNHPVIAFLLLLAIADDAIGLVIIAVFYPDPVLPVAPPWLMLTAAGMLIAFILRRKQVKSYWPYLLFGGVPSWFGLFKAHLHPALALVFIIPFLPHPTREVKHMFEEDPKDYSPLARFEHEWKIIVDFGLFMFGLANAGVGFSAMNTVTWLVFCALLFGKVTGIFVFALLGEKLGFPLPQGMGRRHLLVAGIIAGIGFTVALFVAGEAFTDPVVQGAAKMGAILSIAVFPVAMAAAKLLGIRKRGHSSS</sequence>
<reference key="1">
    <citation type="submission" date="2007-05" db="EMBL/GenBank/DDBJ databases">
        <title>Complete sequence of Geobacter uraniireducens Rf4.</title>
        <authorList>
            <consortium name="US DOE Joint Genome Institute"/>
            <person name="Copeland A."/>
            <person name="Lucas S."/>
            <person name="Lapidus A."/>
            <person name="Barry K."/>
            <person name="Detter J.C."/>
            <person name="Glavina del Rio T."/>
            <person name="Hammon N."/>
            <person name="Israni S."/>
            <person name="Dalin E."/>
            <person name="Tice H."/>
            <person name="Pitluck S."/>
            <person name="Chertkov O."/>
            <person name="Brettin T."/>
            <person name="Bruce D."/>
            <person name="Han C."/>
            <person name="Schmutz J."/>
            <person name="Larimer F."/>
            <person name="Land M."/>
            <person name="Hauser L."/>
            <person name="Kyrpides N."/>
            <person name="Mikhailova N."/>
            <person name="Shelobolina E."/>
            <person name="Aklujkar M."/>
            <person name="Lovley D."/>
            <person name="Richardson P."/>
        </authorList>
    </citation>
    <scope>NUCLEOTIDE SEQUENCE [LARGE SCALE GENOMIC DNA]</scope>
    <source>
        <strain>ATCC BAA-1134 / JCM 13001 / Rf4</strain>
    </source>
</reference>